<comment type="function">
    <text evidence="1">Catalyzes the condensation of isopentenyl diphosphate (IPP) with allylic pyrophosphates generating different type of terpenoids.</text>
</comment>
<comment type="cofactor">
    <cofactor evidence="1">
        <name>Mg(2+)</name>
        <dbReference type="ChEBI" id="CHEBI:18420"/>
    </cofactor>
    <text evidence="1">Binds 2 magnesium ions per subunit.</text>
</comment>
<comment type="subunit">
    <text evidence="1">Homodimer.</text>
</comment>
<comment type="similarity">
    <text evidence="1">Belongs to the UPP synthase family.</text>
</comment>
<feature type="chain" id="PRO_0000123692" description="Isoprenyl transferase">
    <location>
        <begin position="1"/>
        <end position="249"/>
    </location>
</feature>
<feature type="active site" evidence="1">
    <location>
        <position position="25"/>
    </location>
</feature>
<feature type="active site" description="Proton acceptor" evidence="1">
    <location>
        <position position="73"/>
    </location>
</feature>
<feature type="binding site" evidence="1">
    <location>
        <position position="25"/>
    </location>
    <ligand>
        <name>Mg(2+)</name>
        <dbReference type="ChEBI" id="CHEBI:18420"/>
    </ligand>
</feature>
<feature type="binding site" evidence="1">
    <location>
        <begin position="26"/>
        <end position="29"/>
    </location>
    <ligand>
        <name>substrate</name>
    </ligand>
</feature>
<feature type="binding site" evidence="1">
    <location>
        <position position="30"/>
    </location>
    <ligand>
        <name>substrate</name>
    </ligand>
</feature>
<feature type="binding site" evidence="1">
    <location>
        <position position="38"/>
    </location>
    <ligand>
        <name>substrate</name>
    </ligand>
</feature>
<feature type="binding site" evidence="1">
    <location>
        <position position="42"/>
    </location>
    <ligand>
        <name>substrate</name>
    </ligand>
</feature>
<feature type="binding site" evidence="1">
    <location>
        <begin position="70"/>
        <end position="72"/>
    </location>
    <ligand>
        <name>substrate</name>
    </ligand>
</feature>
<feature type="binding site" evidence="1">
    <location>
        <position position="74"/>
    </location>
    <ligand>
        <name>substrate</name>
    </ligand>
</feature>
<feature type="binding site" evidence="1">
    <location>
        <position position="76"/>
    </location>
    <ligand>
        <name>substrate</name>
    </ligand>
</feature>
<feature type="binding site" evidence="1">
    <location>
        <position position="197"/>
    </location>
    <ligand>
        <name>substrate</name>
    </ligand>
</feature>
<feature type="binding site" evidence="1">
    <location>
        <begin position="203"/>
        <end position="205"/>
    </location>
    <ligand>
        <name>substrate</name>
    </ligand>
</feature>
<feature type="binding site" evidence="1">
    <location>
        <position position="216"/>
    </location>
    <ligand>
        <name>Mg(2+)</name>
        <dbReference type="ChEBI" id="CHEBI:18420"/>
    </ligand>
</feature>
<dbReference type="EC" id="2.5.1.-" evidence="1"/>
<dbReference type="EMBL" id="AE004092">
    <property type="protein sequence ID" value="AAK34658.1"/>
    <property type="molecule type" value="Genomic_DNA"/>
</dbReference>
<dbReference type="EMBL" id="CP000017">
    <property type="protein sequence ID" value="AAZ52294.1"/>
    <property type="molecule type" value="Genomic_DNA"/>
</dbReference>
<dbReference type="RefSeq" id="NP_269937.1">
    <property type="nucleotide sequence ID" value="NC_002737.2"/>
</dbReference>
<dbReference type="SMR" id="Q99XY1"/>
<dbReference type="PaxDb" id="1314-HKU360_01793"/>
<dbReference type="KEGG" id="spy:SPy_1965"/>
<dbReference type="KEGG" id="spz:M5005_Spy1676"/>
<dbReference type="PATRIC" id="fig|160490.10.peg.1712"/>
<dbReference type="HOGENOM" id="CLU_038505_1_1_9"/>
<dbReference type="OMA" id="FDRRDLW"/>
<dbReference type="Proteomes" id="UP000000750">
    <property type="component" value="Chromosome"/>
</dbReference>
<dbReference type="GO" id="GO:0005829">
    <property type="term" value="C:cytosol"/>
    <property type="evidence" value="ECO:0007669"/>
    <property type="project" value="TreeGrafter"/>
</dbReference>
<dbReference type="GO" id="GO:0008834">
    <property type="term" value="F:ditrans,polycis-undecaprenyl-diphosphate synthase [(2E,6E)-farnesyl-diphosphate specific] activity"/>
    <property type="evidence" value="ECO:0007669"/>
    <property type="project" value="TreeGrafter"/>
</dbReference>
<dbReference type="GO" id="GO:0000287">
    <property type="term" value="F:magnesium ion binding"/>
    <property type="evidence" value="ECO:0007669"/>
    <property type="project" value="UniProtKB-UniRule"/>
</dbReference>
<dbReference type="GO" id="GO:0030145">
    <property type="term" value="F:manganese ion binding"/>
    <property type="evidence" value="ECO:0007669"/>
    <property type="project" value="TreeGrafter"/>
</dbReference>
<dbReference type="GO" id="GO:0016094">
    <property type="term" value="P:polyprenol biosynthetic process"/>
    <property type="evidence" value="ECO:0007669"/>
    <property type="project" value="TreeGrafter"/>
</dbReference>
<dbReference type="CDD" id="cd00475">
    <property type="entry name" value="Cis_IPPS"/>
    <property type="match status" value="1"/>
</dbReference>
<dbReference type="FunFam" id="3.40.1180.10:FF:000001">
    <property type="entry name" value="(2E,6E)-farnesyl-diphosphate-specific ditrans,polycis-undecaprenyl-diphosphate synthase"/>
    <property type="match status" value="1"/>
</dbReference>
<dbReference type="Gene3D" id="3.40.1180.10">
    <property type="entry name" value="Decaprenyl diphosphate synthase-like"/>
    <property type="match status" value="1"/>
</dbReference>
<dbReference type="HAMAP" id="MF_01139">
    <property type="entry name" value="ISPT"/>
    <property type="match status" value="1"/>
</dbReference>
<dbReference type="InterPro" id="IPR001441">
    <property type="entry name" value="UPP_synth-like"/>
</dbReference>
<dbReference type="InterPro" id="IPR018520">
    <property type="entry name" value="UPP_synth-like_CS"/>
</dbReference>
<dbReference type="InterPro" id="IPR036424">
    <property type="entry name" value="UPP_synth-like_sf"/>
</dbReference>
<dbReference type="NCBIfam" id="NF011405">
    <property type="entry name" value="PRK14830.1"/>
    <property type="match status" value="1"/>
</dbReference>
<dbReference type="NCBIfam" id="TIGR00055">
    <property type="entry name" value="uppS"/>
    <property type="match status" value="1"/>
</dbReference>
<dbReference type="PANTHER" id="PTHR10291:SF0">
    <property type="entry name" value="DEHYDRODOLICHYL DIPHOSPHATE SYNTHASE 2"/>
    <property type="match status" value="1"/>
</dbReference>
<dbReference type="PANTHER" id="PTHR10291">
    <property type="entry name" value="DEHYDRODOLICHYL DIPHOSPHATE SYNTHASE FAMILY MEMBER"/>
    <property type="match status" value="1"/>
</dbReference>
<dbReference type="Pfam" id="PF01255">
    <property type="entry name" value="Prenyltransf"/>
    <property type="match status" value="1"/>
</dbReference>
<dbReference type="SUPFAM" id="SSF64005">
    <property type="entry name" value="Undecaprenyl diphosphate synthase"/>
    <property type="match status" value="1"/>
</dbReference>
<dbReference type="PROSITE" id="PS01066">
    <property type="entry name" value="UPP_SYNTHASE"/>
    <property type="match status" value="1"/>
</dbReference>
<proteinExistence type="inferred from homology"/>
<protein>
    <recommendedName>
        <fullName evidence="1">Isoprenyl transferase</fullName>
        <ecNumber evidence="1">2.5.1.-</ecNumber>
    </recommendedName>
</protein>
<gene>
    <name evidence="1" type="primary">uppS</name>
    <name type="ordered locus">SPy_1965</name>
    <name type="ordered locus">M5005_Spy1676</name>
</gene>
<keyword id="KW-0460">Magnesium</keyword>
<keyword id="KW-0479">Metal-binding</keyword>
<keyword id="KW-1185">Reference proteome</keyword>
<keyword id="KW-0808">Transferase</keyword>
<evidence type="ECO:0000255" key="1">
    <source>
        <dbReference type="HAMAP-Rule" id="MF_01139"/>
    </source>
</evidence>
<organism>
    <name type="scientific">Streptococcus pyogenes serotype M1</name>
    <dbReference type="NCBI Taxonomy" id="301447"/>
    <lineage>
        <taxon>Bacteria</taxon>
        <taxon>Bacillati</taxon>
        <taxon>Bacillota</taxon>
        <taxon>Bacilli</taxon>
        <taxon>Lactobacillales</taxon>
        <taxon>Streptococcaceae</taxon>
        <taxon>Streptococcus</taxon>
    </lineage>
</organism>
<sequence length="249" mass="28257">MFGLKAKSTKKVLGSIPKHIGIIMDGNGRWAKKRLKPRVFGHKAGMDALQEVTITASELGVKVLTVYAFSTENWSRPQDEVSFIMNLPVTFFDKYVPVLHENNVKIQMIGETSRLPEDTLAALNAAIDKTKRNTGLILNFALNYGGRAEITSAVRFIAQDVLDAKLNPGDITEDLIANYLMTDHLPYLYRDPDLIIRTSGELRLSNFLPWQSAYSEFYFTPVLWPDFKKAELLKAIADYNRRQRRFGKV</sequence>
<reference key="1">
    <citation type="journal article" date="2001" name="Proc. Natl. Acad. Sci. U.S.A.">
        <title>Complete genome sequence of an M1 strain of Streptococcus pyogenes.</title>
        <authorList>
            <person name="Ferretti J.J."/>
            <person name="McShan W.M."/>
            <person name="Ajdic D.J."/>
            <person name="Savic D.J."/>
            <person name="Savic G."/>
            <person name="Lyon K."/>
            <person name="Primeaux C."/>
            <person name="Sezate S."/>
            <person name="Suvorov A.N."/>
            <person name="Kenton S."/>
            <person name="Lai H.S."/>
            <person name="Lin S.P."/>
            <person name="Qian Y."/>
            <person name="Jia H.G."/>
            <person name="Najar F.Z."/>
            <person name="Ren Q."/>
            <person name="Zhu H."/>
            <person name="Song L."/>
            <person name="White J."/>
            <person name="Yuan X."/>
            <person name="Clifton S.W."/>
            <person name="Roe B.A."/>
            <person name="McLaughlin R.E."/>
        </authorList>
    </citation>
    <scope>NUCLEOTIDE SEQUENCE [LARGE SCALE GENOMIC DNA]</scope>
    <source>
        <strain>ATCC 700294 / SF370 / Serotype M1</strain>
    </source>
</reference>
<reference key="2">
    <citation type="journal article" date="2005" name="J. Infect. Dis.">
        <title>Evolutionary origin and emergence of a highly successful clone of serotype M1 group A Streptococcus involved multiple horizontal gene transfer events.</title>
        <authorList>
            <person name="Sumby P."/>
            <person name="Porcella S.F."/>
            <person name="Madrigal A.G."/>
            <person name="Barbian K.D."/>
            <person name="Virtaneva K."/>
            <person name="Ricklefs S.M."/>
            <person name="Sturdevant D.E."/>
            <person name="Graham M.R."/>
            <person name="Vuopio-Varkila J."/>
            <person name="Hoe N.P."/>
            <person name="Musser J.M."/>
        </authorList>
    </citation>
    <scope>NUCLEOTIDE SEQUENCE [LARGE SCALE GENOMIC DNA]</scope>
    <source>
        <strain>ATCC BAA-947 / MGAS5005 / Serotype M1</strain>
    </source>
</reference>
<name>ISPT_STRP1</name>
<accession>Q99XY1</accession>
<accession>Q48WI1</accession>